<organism>
    <name type="scientific">Persephonella marina (strain DSM 14350 / EX-H1)</name>
    <dbReference type="NCBI Taxonomy" id="123214"/>
    <lineage>
        <taxon>Bacteria</taxon>
        <taxon>Pseudomonadati</taxon>
        <taxon>Aquificota</taxon>
        <taxon>Aquificia</taxon>
        <taxon>Aquificales</taxon>
        <taxon>Hydrogenothermaceae</taxon>
        <taxon>Persephonella</taxon>
    </lineage>
</organism>
<accession>C0QR95</accession>
<gene>
    <name evidence="1" type="primary">rpoZ</name>
    <name type="ordered locus">PERMA_1423</name>
</gene>
<proteinExistence type="inferred from homology"/>
<feature type="chain" id="PRO_1000194806" description="DNA-directed RNA polymerase subunit omega">
    <location>
        <begin position="1"/>
        <end position="68"/>
    </location>
</feature>
<dbReference type="EC" id="2.7.7.6" evidence="1"/>
<dbReference type="EMBL" id="CP001230">
    <property type="protein sequence ID" value="ACO04505.1"/>
    <property type="molecule type" value="Genomic_DNA"/>
</dbReference>
<dbReference type="RefSeq" id="WP_012676743.1">
    <property type="nucleotide sequence ID" value="NC_012440.1"/>
</dbReference>
<dbReference type="SMR" id="C0QR95"/>
<dbReference type="STRING" id="123214.PERMA_1423"/>
<dbReference type="PaxDb" id="123214-PERMA_1423"/>
<dbReference type="KEGG" id="pmx:PERMA_1423"/>
<dbReference type="eggNOG" id="COG1758">
    <property type="taxonomic scope" value="Bacteria"/>
</dbReference>
<dbReference type="HOGENOM" id="CLU_125406_7_0_0"/>
<dbReference type="OrthoDB" id="15252at2"/>
<dbReference type="Proteomes" id="UP000001366">
    <property type="component" value="Chromosome"/>
</dbReference>
<dbReference type="GO" id="GO:0000428">
    <property type="term" value="C:DNA-directed RNA polymerase complex"/>
    <property type="evidence" value="ECO:0007669"/>
    <property type="project" value="UniProtKB-KW"/>
</dbReference>
<dbReference type="GO" id="GO:0003677">
    <property type="term" value="F:DNA binding"/>
    <property type="evidence" value="ECO:0007669"/>
    <property type="project" value="UniProtKB-UniRule"/>
</dbReference>
<dbReference type="GO" id="GO:0003899">
    <property type="term" value="F:DNA-directed RNA polymerase activity"/>
    <property type="evidence" value="ECO:0007669"/>
    <property type="project" value="UniProtKB-UniRule"/>
</dbReference>
<dbReference type="GO" id="GO:0006351">
    <property type="term" value="P:DNA-templated transcription"/>
    <property type="evidence" value="ECO:0007669"/>
    <property type="project" value="UniProtKB-UniRule"/>
</dbReference>
<dbReference type="Gene3D" id="3.90.940.10">
    <property type="match status" value="1"/>
</dbReference>
<dbReference type="HAMAP" id="MF_00366">
    <property type="entry name" value="RNApol_bact_RpoZ"/>
    <property type="match status" value="1"/>
</dbReference>
<dbReference type="InterPro" id="IPR003716">
    <property type="entry name" value="DNA-dir_RNA_pol_omega"/>
</dbReference>
<dbReference type="InterPro" id="IPR006110">
    <property type="entry name" value="Pol_omega/Rpo6/RPB6"/>
</dbReference>
<dbReference type="InterPro" id="IPR036161">
    <property type="entry name" value="RPB6/omega-like_sf"/>
</dbReference>
<dbReference type="NCBIfam" id="TIGR00690">
    <property type="entry name" value="rpoZ"/>
    <property type="match status" value="1"/>
</dbReference>
<dbReference type="Pfam" id="PF01192">
    <property type="entry name" value="RNA_pol_Rpb6"/>
    <property type="match status" value="1"/>
</dbReference>
<dbReference type="SMART" id="SM01409">
    <property type="entry name" value="RNA_pol_Rpb6"/>
    <property type="match status" value="1"/>
</dbReference>
<dbReference type="SUPFAM" id="SSF63562">
    <property type="entry name" value="RPB6/omega subunit-like"/>
    <property type="match status" value="1"/>
</dbReference>
<name>RPOZ_PERMH</name>
<evidence type="ECO:0000255" key="1">
    <source>
        <dbReference type="HAMAP-Rule" id="MF_00366"/>
    </source>
</evidence>
<reference key="1">
    <citation type="journal article" date="2009" name="J. Bacteriol.">
        <title>Complete and draft genome sequences of six members of the Aquificales.</title>
        <authorList>
            <person name="Reysenbach A.-L."/>
            <person name="Hamamura N."/>
            <person name="Podar M."/>
            <person name="Griffiths E."/>
            <person name="Ferreira S."/>
            <person name="Hochstein R."/>
            <person name="Heidelberg J."/>
            <person name="Johnson J."/>
            <person name="Mead D."/>
            <person name="Pohorille A."/>
            <person name="Sarmiento M."/>
            <person name="Schweighofer K."/>
            <person name="Seshadri R."/>
            <person name="Voytek M.A."/>
        </authorList>
    </citation>
    <scope>NUCLEOTIDE SEQUENCE [LARGE SCALE GENOMIC DNA]</scope>
    <source>
        <strain>DSM 14350 / EX-H1</strain>
    </source>
</reference>
<comment type="function">
    <text evidence="1">Promotes RNA polymerase assembly. Latches the N- and C-terminal regions of the beta' subunit thereby facilitating its interaction with the beta and alpha subunits.</text>
</comment>
<comment type="catalytic activity">
    <reaction evidence="1">
        <text>RNA(n) + a ribonucleoside 5'-triphosphate = RNA(n+1) + diphosphate</text>
        <dbReference type="Rhea" id="RHEA:21248"/>
        <dbReference type="Rhea" id="RHEA-COMP:14527"/>
        <dbReference type="Rhea" id="RHEA-COMP:17342"/>
        <dbReference type="ChEBI" id="CHEBI:33019"/>
        <dbReference type="ChEBI" id="CHEBI:61557"/>
        <dbReference type="ChEBI" id="CHEBI:140395"/>
        <dbReference type="EC" id="2.7.7.6"/>
    </reaction>
</comment>
<comment type="subunit">
    <text evidence="1">The RNAP catalytic core consists of 2 alpha, 1 beta, 1 beta' and 1 omega subunit. When a sigma factor is associated with the core the holoenzyme is formed, which can initiate transcription.</text>
</comment>
<comment type="similarity">
    <text evidence="1">Belongs to the RNA polymerase subunit omega family.</text>
</comment>
<keyword id="KW-0240">DNA-directed RNA polymerase</keyword>
<keyword id="KW-0548">Nucleotidyltransferase</keyword>
<keyword id="KW-1185">Reference proteome</keyword>
<keyword id="KW-0804">Transcription</keyword>
<keyword id="KW-0808">Transferase</keyword>
<sequence length="68" mass="7693">MNKRPLIEQALKRVNNRYELVHAAAKLAKDLYETGAESYVTEEGIPLKKTVISINEIAKGRAVILRKE</sequence>
<protein>
    <recommendedName>
        <fullName evidence="1">DNA-directed RNA polymerase subunit omega</fullName>
        <shortName evidence="1">RNAP omega subunit</shortName>
        <ecNumber evidence="1">2.7.7.6</ecNumber>
    </recommendedName>
    <alternativeName>
        <fullName evidence="1">RNA polymerase omega subunit</fullName>
    </alternativeName>
    <alternativeName>
        <fullName evidence="1">Transcriptase subunit omega</fullName>
    </alternativeName>
</protein>